<feature type="chain" id="PRO_1000099461" description="UvrABC system protein C">
    <location>
        <begin position="1"/>
        <end position="602"/>
    </location>
</feature>
<feature type="domain" description="GIY-YIG" evidence="1">
    <location>
        <begin position="17"/>
        <end position="94"/>
    </location>
</feature>
<feature type="domain" description="UVR" evidence="1">
    <location>
        <begin position="199"/>
        <end position="234"/>
    </location>
</feature>
<organism>
    <name type="scientific">Borrelia hermsii (strain HS1 / DAH)</name>
    <dbReference type="NCBI Taxonomy" id="314723"/>
    <lineage>
        <taxon>Bacteria</taxon>
        <taxon>Pseudomonadati</taxon>
        <taxon>Spirochaetota</taxon>
        <taxon>Spirochaetia</taxon>
        <taxon>Spirochaetales</taxon>
        <taxon>Borreliaceae</taxon>
        <taxon>Borrelia</taxon>
    </lineage>
</organism>
<evidence type="ECO:0000255" key="1">
    <source>
        <dbReference type="HAMAP-Rule" id="MF_00203"/>
    </source>
</evidence>
<keyword id="KW-0963">Cytoplasm</keyword>
<keyword id="KW-0227">DNA damage</keyword>
<keyword id="KW-0228">DNA excision</keyword>
<keyword id="KW-0234">DNA repair</keyword>
<keyword id="KW-0267">Excision nuclease</keyword>
<keyword id="KW-0742">SOS response</keyword>
<protein>
    <recommendedName>
        <fullName evidence="1">UvrABC system protein C</fullName>
        <shortName evidence="1">Protein UvrC</shortName>
    </recommendedName>
    <alternativeName>
        <fullName evidence="1">Excinuclease ABC subunit C</fullName>
    </alternativeName>
</protein>
<comment type="function">
    <text evidence="1">The UvrABC repair system catalyzes the recognition and processing of DNA lesions. UvrC both incises the 5' and 3' sides of the lesion. The N-terminal half is responsible for the 3' incision and the C-terminal half is responsible for the 5' incision.</text>
</comment>
<comment type="subunit">
    <text evidence="1">Interacts with UvrB in an incision complex.</text>
</comment>
<comment type="subcellular location">
    <subcellularLocation>
        <location evidence="1">Cytoplasm</location>
    </subcellularLocation>
</comment>
<comment type="similarity">
    <text evidence="1">Belongs to the UvrC family.</text>
</comment>
<reference key="1">
    <citation type="submission" date="2004-12" db="EMBL/GenBank/DDBJ databases">
        <title>The genome sequence of Borrelia hermsii and Borrelia turicatae: comparative analysis of two agents of endemic N. America relapsing fever.</title>
        <authorList>
            <person name="Porcella S.F."/>
            <person name="Raffel S.J."/>
            <person name="Schrumpf M.E."/>
            <person name="Montgomery B."/>
            <person name="Smith T."/>
            <person name="Schwan T.G."/>
        </authorList>
    </citation>
    <scope>NUCLEOTIDE SEQUENCE [LARGE SCALE GENOMIC DNA]</scope>
    <source>
        <strain>HS1 / DAH</strain>
    </source>
</reference>
<gene>
    <name evidence="1" type="primary">uvrC</name>
    <name type="ordered locus">BH0457</name>
</gene>
<accession>B2S0F9</accession>
<dbReference type="EMBL" id="CP000048">
    <property type="protein sequence ID" value="AAX16965.1"/>
    <property type="molecule type" value="Genomic_DNA"/>
</dbReference>
<dbReference type="RefSeq" id="WP_012422221.1">
    <property type="nucleotide sequence ID" value="NZ_CP073136.1"/>
</dbReference>
<dbReference type="SMR" id="B2S0F9"/>
<dbReference type="KEGG" id="bhr:BH0457"/>
<dbReference type="HOGENOM" id="CLU_014841_3_2_12"/>
<dbReference type="Proteomes" id="UP000008834">
    <property type="component" value="Chromosome"/>
</dbReference>
<dbReference type="GO" id="GO:0005737">
    <property type="term" value="C:cytoplasm"/>
    <property type="evidence" value="ECO:0007669"/>
    <property type="project" value="UniProtKB-SubCell"/>
</dbReference>
<dbReference type="GO" id="GO:0009380">
    <property type="term" value="C:excinuclease repair complex"/>
    <property type="evidence" value="ECO:0007669"/>
    <property type="project" value="InterPro"/>
</dbReference>
<dbReference type="GO" id="GO:0003677">
    <property type="term" value="F:DNA binding"/>
    <property type="evidence" value="ECO:0007669"/>
    <property type="project" value="UniProtKB-UniRule"/>
</dbReference>
<dbReference type="GO" id="GO:0009381">
    <property type="term" value="F:excinuclease ABC activity"/>
    <property type="evidence" value="ECO:0007669"/>
    <property type="project" value="UniProtKB-UniRule"/>
</dbReference>
<dbReference type="GO" id="GO:0006289">
    <property type="term" value="P:nucleotide-excision repair"/>
    <property type="evidence" value="ECO:0007669"/>
    <property type="project" value="UniProtKB-UniRule"/>
</dbReference>
<dbReference type="GO" id="GO:0009432">
    <property type="term" value="P:SOS response"/>
    <property type="evidence" value="ECO:0007669"/>
    <property type="project" value="UniProtKB-UniRule"/>
</dbReference>
<dbReference type="CDD" id="cd10434">
    <property type="entry name" value="GIY-YIG_UvrC_Cho"/>
    <property type="match status" value="1"/>
</dbReference>
<dbReference type="FunFam" id="3.40.1440.10:FF:000001">
    <property type="entry name" value="UvrABC system protein C"/>
    <property type="match status" value="1"/>
</dbReference>
<dbReference type="Gene3D" id="1.10.150.20">
    <property type="entry name" value="5' to 3' exonuclease, C-terminal subdomain"/>
    <property type="match status" value="1"/>
</dbReference>
<dbReference type="Gene3D" id="3.40.1440.10">
    <property type="entry name" value="GIY-YIG endonuclease"/>
    <property type="match status" value="1"/>
</dbReference>
<dbReference type="Gene3D" id="3.30.420.340">
    <property type="entry name" value="UvrC, RNAse H endonuclease domain"/>
    <property type="match status" value="1"/>
</dbReference>
<dbReference type="HAMAP" id="MF_00203">
    <property type="entry name" value="UvrC"/>
    <property type="match status" value="1"/>
</dbReference>
<dbReference type="InterPro" id="IPR000305">
    <property type="entry name" value="GIY-YIG_endonuc"/>
</dbReference>
<dbReference type="InterPro" id="IPR035901">
    <property type="entry name" value="GIY-YIG_endonuc_sf"/>
</dbReference>
<dbReference type="InterPro" id="IPR047296">
    <property type="entry name" value="GIY-YIG_UvrC_Cho"/>
</dbReference>
<dbReference type="InterPro" id="IPR010994">
    <property type="entry name" value="RuvA_2-like"/>
</dbReference>
<dbReference type="InterPro" id="IPR001943">
    <property type="entry name" value="UVR_dom"/>
</dbReference>
<dbReference type="InterPro" id="IPR036876">
    <property type="entry name" value="UVR_dom_sf"/>
</dbReference>
<dbReference type="InterPro" id="IPR050066">
    <property type="entry name" value="UvrABC_protein_C"/>
</dbReference>
<dbReference type="InterPro" id="IPR004791">
    <property type="entry name" value="UvrC"/>
</dbReference>
<dbReference type="InterPro" id="IPR001162">
    <property type="entry name" value="UvrC_RNase_H_dom"/>
</dbReference>
<dbReference type="InterPro" id="IPR038476">
    <property type="entry name" value="UvrC_RNase_H_dom_sf"/>
</dbReference>
<dbReference type="NCBIfam" id="NF011264">
    <property type="entry name" value="PRK14670.1"/>
    <property type="match status" value="1"/>
</dbReference>
<dbReference type="NCBIfam" id="TIGR00194">
    <property type="entry name" value="uvrC"/>
    <property type="match status" value="1"/>
</dbReference>
<dbReference type="PANTHER" id="PTHR30562:SF1">
    <property type="entry name" value="UVRABC SYSTEM PROTEIN C"/>
    <property type="match status" value="1"/>
</dbReference>
<dbReference type="PANTHER" id="PTHR30562">
    <property type="entry name" value="UVRC/OXIDOREDUCTASE"/>
    <property type="match status" value="1"/>
</dbReference>
<dbReference type="Pfam" id="PF01541">
    <property type="entry name" value="GIY-YIG"/>
    <property type="match status" value="1"/>
</dbReference>
<dbReference type="Pfam" id="PF02151">
    <property type="entry name" value="UVR"/>
    <property type="match status" value="1"/>
</dbReference>
<dbReference type="Pfam" id="PF22920">
    <property type="entry name" value="UvrC_RNaseH"/>
    <property type="match status" value="1"/>
</dbReference>
<dbReference type="Pfam" id="PF08459">
    <property type="entry name" value="UvrC_RNaseH_dom"/>
    <property type="match status" value="1"/>
</dbReference>
<dbReference type="SMART" id="SM00465">
    <property type="entry name" value="GIYc"/>
    <property type="match status" value="1"/>
</dbReference>
<dbReference type="SUPFAM" id="SSF46600">
    <property type="entry name" value="C-terminal UvrC-binding domain of UvrB"/>
    <property type="match status" value="1"/>
</dbReference>
<dbReference type="SUPFAM" id="SSF82771">
    <property type="entry name" value="GIY-YIG endonuclease"/>
    <property type="match status" value="1"/>
</dbReference>
<dbReference type="SUPFAM" id="SSF47781">
    <property type="entry name" value="RuvA domain 2-like"/>
    <property type="match status" value="1"/>
</dbReference>
<dbReference type="PROSITE" id="PS50164">
    <property type="entry name" value="GIY_YIG"/>
    <property type="match status" value="1"/>
</dbReference>
<dbReference type="PROSITE" id="PS50165">
    <property type="entry name" value="UVRC"/>
    <property type="match status" value="1"/>
</dbReference>
<proteinExistence type="inferred from homology"/>
<sequence length="602" mass="69933">MREHLNHLHKKVQELPTTSGCYKMYSQNNKILYIGKAKNLRARVKNYFLKRISHKTKILMRNVANIEVITTNSEYEALLLECNLIKEYKPDYNIKLKDDKGYPMIRITCEKYPRIFKTRKIINDGSEYFGPYVNAKNLDLVLDLINKTFKTRKCKKKSKTPCLYFHMGQCLGVCYREDLEEQYKKEVDKIRHILNGKISKLLDETEIKMKEAIKKEDFEAAIKLKETKRSLIEISQTQIITRMNKLSADYIYIHQTDSLNAIVILKYKDGKLVEKDINFDESIYEEDELTAKFITQYYTALNMIVPNKIYIFKKIETENITKLINELKNTKTEIICEETKETIKIMEMAISNAKIALREYDNEKNRALESLKNILEMTKLPKTIEGFDISHLNGHKTVASLVSFKMGKPFKDGYRVYKINSLNNGEIDDLKAIKEVISRRYSKLINEQLALPDLILIDGGKGQLSAAYSILKGLKIENEVIVCALAKKEEIIFLPNKTQGIKLSKGNPALQILQNVRDEAHRRANSFNRTLRRNIKLNYSKIKGIGEEKAKNILKTLGTYKDILLLNEDEIAKKMKINIKMAKKIKKFSEDQNLKNTYSIKS</sequence>
<name>UVRC_BORHD</name>